<reference key="1">
    <citation type="journal article" date="2009" name="BMC Genomics">
        <title>Metabolic analysis of the soil microbe Dechloromonas aromatica str. RCB: indications of a surprisingly complex life-style and cryptic anaerobic pathways for aromatic degradation.</title>
        <authorList>
            <person name="Salinero K.K."/>
            <person name="Keller K."/>
            <person name="Feil W.S."/>
            <person name="Feil H."/>
            <person name="Trong S."/>
            <person name="Di Bartolo G."/>
            <person name="Lapidus A."/>
        </authorList>
    </citation>
    <scope>NUCLEOTIDE SEQUENCE [LARGE SCALE GENOMIC DNA]</scope>
    <source>
        <strain>RCB</strain>
    </source>
</reference>
<accession>Q47C53</accession>
<gene>
    <name evidence="1" type="primary">lysS</name>
    <name type="ordered locus">Daro_2848</name>
</gene>
<sequence>MSNAEQQAPVQQDENQLIAERRAKLAEWRKTGKAFPNDFQRENTAAKVLEGYGEKTAEELEGLPIEVKVAGRLMLKRVMGKASFATIQDLSGRIQIYITRDRVGEEVYADFKTWDLGDIIGVTGSLMKTKTGELSIQAAEIRLLTKSLRPLPDKFHGLADQEMKYRQRYVDLIMNEETRFTFRARSAIVASIRNYMTGHGFMEVETPMMHPIPGGASAKPFVTHHNALDMQQFLRIAPELYLKRLVVGGFEKVFEINRNFRNEGLSPRHNPEFTMMEFYEAYANYHTLMDFTEGLLRHAAREALGKEVFVYQGRELDLSKPFHRLTINQAIQRQHPEFSDAELADPEFLKAKIKHFGEPLKPGGLGSLQLQLFEACAEAHCWEPTFIIDYPVEVSPLARASDTNPEITERFELFIVGREIANGFSELNDAEDQAARFQEQMKAKDAGDEEAMYYDADFIRALEYGLPPTGGCGIGIDRLIMLLTDAAAIRDVILFPSMRPE</sequence>
<keyword id="KW-0030">Aminoacyl-tRNA synthetase</keyword>
<keyword id="KW-0067">ATP-binding</keyword>
<keyword id="KW-0963">Cytoplasm</keyword>
<keyword id="KW-0436">Ligase</keyword>
<keyword id="KW-0460">Magnesium</keyword>
<keyword id="KW-0479">Metal-binding</keyword>
<keyword id="KW-0547">Nucleotide-binding</keyword>
<keyword id="KW-0648">Protein biosynthesis</keyword>
<feature type="chain" id="PRO_1000012873" description="Lysine--tRNA ligase">
    <location>
        <begin position="1"/>
        <end position="501"/>
    </location>
</feature>
<feature type="binding site" evidence="1">
    <location>
        <position position="412"/>
    </location>
    <ligand>
        <name>Mg(2+)</name>
        <dbReference type="ChEBI" id="CHEBI:18420"/>
        <label>1</label>
    </ligand>
</feature>
<feature type="binding site" evidence="1">
    <location>
        <position position="419"/>
    </location>
    <ligand>
        <name>Mg(2+)</name>
        <dbReference type="ChEBI" id="CHEBI:18420"/>
        <label>1</label>
    </ligand>
</feature>
<feature type="binding site" evidence="1">
    <location>
        <position position="419"/>
    </location>
    <ligand>
        <name>Mg(2+)</name>
        <dbReference type="ChEBI" id="CHEBI:18420"/>
        <label>2</label>
    </ligand>
</feature>
<evidence type="ECO:0000255" key="1">
    <source>
        <dbReference type="HAMAP-Rule" id="MF_00252"/>
    </source>
</evidence>
<proteinExistence type="inferred from homology"/>
<organism>
    <name type="scientific">Dechloromonas aromatica (strain RCB)</name>
    <dbReference type="NCBI Taxonomy" id="159087"/>
    <lineage>
        <taxon>Bacteria</taxon>
        <taxon>Pseudomonadati</taxon>
        <taxon>Pseudomonadota</taxon>
        <taxon>Betaproteobacteria</taxon>
        <taxon>Rhodocyclales</taxon>
        <taxon>Azonexaceae</taxon>
        <taxon>Dechloromonas</taxon>
    </lineage>
</organism>
<dbReference type="EC" id="6.1.1.6" evidence="1"/>
<dbReference type="EMBL" id="CP000089">
    <property type="protein sequence ID" value="AAZ47578.1"/>
    <property type="molecule type" value="Genomic_DNA"/>
</dbReference>
<dbReference type="SMR" id="Q47C53"/>
<dbReference type="STRING" id="159087.Daro_2848"/>
<dbReference type="KEGG" id="dar:Daro_2848"/>
<dbReference type="eggNOG" id="COG1190">
    <property type="taxonomic scope" value="Bacteria"/>
</dbReference>
<dbReference type="HOGENOM" id="CLU_008255_6_0_4"/>
<dbReference type="OrthoDB" id="9801152at2"/>
<dbReference type="GO" id="GO:0005829">
    <property type="term" value="C:cytosol"/>
    <property type="evidence" value="ECO:0007669"/>
    <property type="project" value="TreeGrafter"/>
</dbReference>
<dbReference type="GO" id="GO:0005524">
    <property type="term" value="F:ATP binding"/>
    <property type="evidence" value="ECO:0007669"/>
    <property type="project" value="UniProtKB-UniRule"/>
</dbReference>
<dbReference type="GO" id="GO:0004824">
    <property type="term" value="F:lysine-tRNA ligase activity"/>
    <property type="evidence" value="ECO:0007669"/>
    <property type="project" value="UniProtKB-UniRule"/>
</dbReference>
<dbReference type="GO" id="GO:0000287">
    <property type="term" value="F:magnesium ion binding"/>
    <property type="evidence" value="ECO:0007669"/>
    <property type="project" value="UniProtKB-UniRule"/>
</dbReference>
<dbReference type="GO" id="GO:0000049">
    <property type="term" value="F:tRNA binding"/>
    <property type="evidence" value="ECO:0007669"/>
    <property type="project" value="TreeGrafter"/>
</dbReference>
<dbReference type="GO" id="GO:0006430">
    <property type="term" value="P:lysyl-tRNA aminoacylation"/>
    <property type="evidence" value="ECO:0007669"/>
    <property type="project" value="UniProtKB-UniRule"/>
</dbReference>
<dbReference type="CDD" id="cd00775">
    <property type="entry name" value="LysRS_core"/>
    <property type="match status" value="1"/>
</dbReference>
<dbReference type="CDD" id="cd04322">
    <property type="entry name" value="LysRS_N"/>
    <property type="match status" value="1"/>
</dbReference>
<dbReference type="FunFam" id="2.40.50.140:FF:000024">
    <property type="entry name" value="Lysine--tRNA ligase"/>
    <property type="match status" value="1"/>
</dbReference>
<dbReference type="FunFam" id="3.30.930.10:FF:000001">
    <property type="entry name" value="Lysine--tRNA ligase"/>
    <property type="match status" value="1"/>
</dbReference>
<dbReference type="Gene3D" id="3.30.930.10">
    <property type="entry name" value="Bira Bifunctional Protein, Domain 2"/>
    <property type="match status" value="1"/>
</dbReference>
<dbReference type="Gene3D" id="2.40.50.140">
    <property type="entry name" value="Nucleic acid-binding proteins"/>
    <property type="match status" value="1"/>
</dbReference>
<dbReference type="HAMAP" id="MF_00252">
    <property type="entry name" value="Lys_tRNA_synth_class2"/>
    <property type="match status" value="1"/>
</dbReference>
<dbReference type="InterPro" id="IPR004364">
    <property type="entry name" value="Aa-tRNA-synt_II"/>
</dbReference>
<dbReference type="InterPro" id="IPR006195">
    <property type="entry name" value="aa-tRNA-synth_II"/>
</dbReference>
<dbReference type="InterPro" id="IPR045864">
    <property type="entry name" value="aa-tRNA-synth_II/BPL/LPL"/>
</dbReference>
<dbReference type="InterPro" id="IPR002313">
    <property type="entry name" value="Lys-tRNA-ligase_II"/>
</dbReference>
<dbReference type="InterPro" id="IPR044136">
    <property type="entry name" value="Lys-tRNA-ligase_II_N"/>
</dbReference>
<dbReference type="InterPro" id="IPR018149">
    <property type="entry name" value="Lys-tRNA-synth_II_C"/>
</dbReference>
<dbReference type="InterPro" id="IPR012340">
    <property type="entry name" value="NA-bd_OB-fold"/>
</dbReference>
<dbReference type="InterPro" id="IPR004365">
    <property type="entry name" value="NA-bd_OB_tRNA"/>
</dbReference>
<dbReference type="NCBIfam" id="TIGR00499">
    <property type="entry name" value="lysS_bact"/>
    <property type="match status" value="1"/>
</dbReference>
<dbReference type="NCBIfam" id="NF001756">
    <property type="entry name" value="PRK00484.1"/>
    <property type="match status" value="1"/>
</dbReference>
<dbReference type="PANTHER" id="PTHR42918:SF15">
    <property type="entry name" value="LYSINE--TRNA LIGASE, CHLOROPLASTIC_MITOCHONDRIAL"/>
    <property type="match status" value="1"/>
</dbReference>
<dbReference type="PANTHER" id="PTHR42918">
    <property type="entry name" value="LYSYL-TRNA SYNTHETASE"/>
    <property type="match status" value="1"/>
</dbReference>
<dbReference type="Pfam" id="PF00152">
    <property type="entry name" value="tRNA-synt_2"/>
    <property type="match status" value="1"/>
</dbReference>
<dbReference type="Pfam" id="PF01336">
    <property type="entry name" value="tRNA_anti-codon"/>
    <property type="match status" value="1"/>
</dbReference>
<dbReference type="PRINTS" id="PR00982">
    <property type="entry name" value="TRNASYNTHLYS"/>
</dbReference>
<dbReference type="SUPFAM" id="SSF55681">
    <property type="entry name" value="Class II aaRS and biotin synthetases"/>
    <property type="match status" value="1"/>
</dbReference>
<dbReference type="SUPFAM" id="SSF50249">
    <property type="entry name" value="Nucleic acid-binding proteins"/>
    <property type="match status" value="1"/>
</dbReference>
<dbReference type="PROSITE" id="PS50862">
    <property type="entry name" value="AA_TRNA_LIGASE_II"/>
    <property type="match status" value="1"/>
</dbReference>
<protein>
    <recommendedName>
        <fullName evidence="1">Lysine--tRNA ligase</fullName>
        <ecNumber evidence="1">6.1.1.6</ecNumber>
    </recommendedName>
    <alternativeName>
        <fullName evidence="1">Lysyl-tRNA synthetase</fullName>
        <shortName evidence="1">LysRS</shortName>
    </alternativeName>
</protein>
<comment type="catalytic activity">
    <reaction evidence="1">
        <text>tRNA(Lys) + L-lysine + ATP = L-lysyl-tRNA(Lys) + AMP + diphosphate</text>
        <dbReference type="Rhea" id="RHEA:20792"/>
        <dbReference type="Rhea" id="RHEA-COMP:9696"/>
        <dbReference type="Rhea" id="RHEA-COMP:9697"/>
        <dbReference type="ChEBI" id="CHEBI:30616"/>
        <dbReference type="ChEBI" id="CHEBI:32551"/>
        <dbReference type="ChEBI" id="CHEBI:33019"/>
        <dbReference type="ChEBI" id="CHEBI:78442"/>
        <dbReference type="ChEBI" id="CHEBI:78529"/>
        <dbReference type="ChEBI" id="CHEBI:456215"/>
        <dbReference type="EC" id="6.1.1.6"/>
    </reaction>
</comment>
<comment type="cofactor">
    <cofactor evidence="1">
        <name>Mg(2+)</name>
        <dbReference type="ChEBI" id="CHEBI:18420"/>
    </cofactor>
    <text evidence="1">Binds 3 Mg(2+) ions per subunit.</text>
</comment>
<comment type="subunit">
    <text evidence="1">Homodimer.</text>
</comment>
<comment type="subcellular location">
    <subcellularLocation>
        <location evidence="1">Cytoplasm</location>
    </subcellularLocation>
</comment>
<comment type="similarity">
    <text evidence="1">Belongs to the class-II aminoacyl-tRNA synthetase family.</text>
</comment>
<name>SYK_DECAR</name>